<organism>
    <name type="scientific">Macaca fascicularis</name>
    <name type="common">Crab-eating macaque</name>
    <name type="synonym">Cynomolgus monkey</name>
    <dbReference type="NCBI Taxonomy" id="9541"/>
    <lineage>
        <taxon>Eukaryota</taxon>
        <taxon>Metazoa</taxon>
        <taxon>Chordata</taxon>
        <taxon>Craniata</taxon>
        <taxon>Vertebrata</taxon>
        <taxon>Euteleostomi</taxon>
        <taxon>Mammalia</taxon>
        <taxon>Eutheria</taxon>
        <taxon>Euarchontoglires</taxon>
        <taxon>Primates</taxon>
        <taxon>Haplorrhini</taxon>
        <taxon>Catarrhini</taxon>
        <taxon>Cercopithecidae</taxon>
        <taxon>Cercopithecinae</taxon>
        <taxon>Macaca</taxon>
    </lineage>
</organism>
<gene>
    <name evidence="3" type="primary">NDUFV1</name>
    <name type="ORF">QccE-11505</name>
</gene>
<reference key="1">
    <citation type="submission" date="2002-04" db="EMBL/GenBank/DDBJ databases">
        <title>Isolation and characterization of cDNA for macaque neurological disease genes.</title>
        <authorList>
            <person name="Kusuda J."/>
            <person name="Osada N."/>
            <person name="Hida M."/>
            <person name="Sugano S."/>
            <person name="Hashimoto K."/>
        </authorList>
    </citation>
    <scope>NUCLEOTIDE SEQUENCE [LARGE SCALE MRNA]</scope>
    <source>
        <tissue>Brain cortex</tissue>
    </source>
</reference>
<comment type="function">
    <text evidence="3">Core subunit of the mitochondrial membrane respiratory chain NADH dehydrogenase (Complex I) which catalyzes electron transfer from NADH through the respiratory chain, using ubiquinone as an electron acceptor. Part of the peripheral arm of the enzyme, where the electrons from NADH are accepted by flavin mononucleotide (FMN) and then passed along a chain of iron-sulfur clusters by electron tunnelling to the final acceptor ubiquinone. Contains FMN, which is the initial electron acceptor as well as one iron-sulfur cluster.</text>
</comment>
<comment type="catalytic activity">
    <reaction evidence="3">
        <text>a ubiquinone + NADH + 5 H(+)(in) = a ubiquinol + NAD(+) + 4 H(+)(out)</text>
        <dbReference type="Rhea" id="RHEA:29091"/>
        <dbReference type="Rhea" id="RHEA-COMP:9565"/>
        <dbReference type="Rhea" id="RHEA-COMP:9566"/>
        <dbReference type="ChEBI" id="CHEBI:15378"/>
        <dbReference type="ChEBI" id="CHEBI:16389"/>
        <dbReference type="ChEBI" id="CHEBI:17976"/>
        <dbReference type="ChEBI" id="CHEBI:57540"/>
        <dbReference type="ChEBI" id="CHEBI:57945"/>
        <dbReference type="EC" id="7.1.1.2"/>
    </reaction>
    <physiologicalReaction direction="left-to-right" evidence="3">
        <dbReference type="Rhea" id="RHEA:29092"/>
    </physiologicalReaction>
</comment>
<comment type="cofactor">
    <cofactor evidence="3">
        <name>FMN</name>
        <dbReference type="ChEBI" id="CHEBI:58210"/>
    </cofactor>
    <text evidence="3">Binds 1 FMN.</text>
</comment>
<comment type="cofactor">
    <cofactor evidence="3">
        <name>[4Fe-4S] cluster</name>
        <dbReference type="ChEBI" id="CHEBI:49883"/>
    </cofactor>
    <text evidence="3">Binds 1 [4Fe-4S] cluster.</text>
</comment>
<comment type="subunit">
    <text evidence="3">Core subunit of respiratory chain NADH dehydrogenase (Complex I) which is composed of 45 different subunits (By similarity). This is a component of the flavoprotein-sulfur (FP) fragment of the enzyme (By similarity). Interacts with RAB5IF (By similarity).</text>
</comment>
<comment type="subcellular location">
    <subcellularLocation>
        <location evidence="2">Mitochondrion inner membrane</location>
        <topology evidence="2">Peripheral membrane protein</topology>
        <orientation evidence="2">Matrix side</orientation>
    </subcellularLocation>
</comment>
<comment type="similarity">
    <text evidence="6">Belongs to the complex I 51 kDa subunit family.</text>
</comment>
<dbReference type="EC" id="7.1.1.2" evidence="3"/>
<dbReference type="EMBL" id="AB083320">
    <property type="protein sequence ID" value="BAC20599.1"/>
    <property type="molecule type" value="mRNA"/>
</dbReference>
<dbReference type="SMR" id="Q8HXQ9"/>
<dbReference type="STRING" id="9541.ENSMFAP00000038825"/>
<dbReference type="eggNOG" id="KOG2658">
    <property type="taxonomic scope" value="Eukaryota"/>
</dbReference>
<dbReference type="Proteomes" id="UP000233100">
    <property type="component" value="Unplaced"/>
</dbReference>
<dbReference type="GO" id="GO:0005743">
    <property type="term" value="C:mitochondrial inner membrane"/>
    <property type="evidence" value="ECO:0000250"/>
    <property type="project" value="UniProtKB"/>
</dbReference>
<dbReference type="GO" id="GO:0045271">
    <property type="term" value="C:respiratory chain complex I"/>
    <property type="evidence" value="ECO:0000250"/>
    <property type="project" value="UniProtKB"/>
</dbReference>
<dbReference type="GO" id="GO:0051539">
    <property type="term" value="F:4 iron, 4 sulfur cluster binding"/>
    <property type="evidence" value="ECO:0007669"/>
    <property type="project" value="UniProtKB-KW"/>
</dbReference>
<dbReference type="GO" id="GO:0010181">
    <property type="term" value="F:FMN binding"/>
    <property type="evidence" value="ECO:0007669"/>
    <property type="project" value="InterPro"/>
</dbReference>
<dbReference type="GO" id="GO:0046872">
    <property type="term" value="F:metal ion binding"/>
    <property type="evidence" value="ECO:0007669"/>
    <property type="project" value="UniProtKB-KW"/>
</dbReference>
<dbReference type="GO" id="GO:0051287">
    <property type="term" value="F:NAD binding"/>
    <property type="evidence" value="ECO:0007669"/>
    <property type="project" value="InterPro"/>
</dbReference>
<dbReference type="GO" id="GO:0008137">
    <property type="term" value="F:NADH dehydrogenase (ubiquinone) activity"/>
    <property type="evidence" value="ECO:0000250"/>
    <property type="project" value="UniProtKB"/>
</dbReference>
<dbReference type="GO" id="GO:0006120">
    <property type="term" value="P:mitochondrial electron transport, NADH to ubiquinone"/>
    <property type="evidence" value="ECO:0000250"/>
    <property type="project" value="UniProtKB"/>
</dbReference>
<dbReference type="FunFam" id="1.20.1440.230:FF:000001">
    <property type="entry name" value="Mitochondrial NADH dehydrogenase flavoprotein 1"/>
    <property type="match status" value="1"/>
</dbReference>
<dbReference type="FunFam" id="3.10.20.600:FF:000001">
    <property type="entry name" value="NADH dehydrogenase [ubiquinone] flavoprotein 1, mitochondrial"/>
    <property type="match status" value="1"/>
</dbReference>
<dbReference type="FunFam" id="3.40.50.11540:FF:000001">
    <property type="entry name" value="NADH dehydrogenase [ubiquinone] flavoprotein 1, mitochondrial"/>
    <property type="match status" value="1"/>
</dbReference>
<dbReference type="Gene3D" id="3.10.20.600">
    <property type="match status" value="1"/>
</dbReference>
<dbReference type="Gene3D" id="3.40.50.11540">
    <property type="entry name" value="NADH-ubiquinone oxidoreductase 51kDa subunit"/>
    <property type="match status" value="1"/>
</dbReference>
<dbReference type="Gene3D" id="1.20.1440.230">
    <property type="entry name" value="NADH-ubiquinone oxidoreductase 51kDa subunit, iron-sulphur binding domain"/>
    <property type="match status" value="1"/>
</dbReference>
<dbReference type="InterPro" id="IPR050837">
    <property type="entry name" value="ComplexI_51kDa_subunit"/>
</dbReference>
<dbReference type="InterPro" id="IPR001949">
    <property type="entry name" value="NADH-UbQ_OxRdtase_51kDa_CS"/>
</dbReference>
<dbReference type="InterPro" id="IPR011537">
    <property type="entry name" value="NADH-UbQ_OxRdtase_suF"/>
</dbReference>
<dbReference type="InterPro" id="IPR011538">
    <property type="entry name" value="Nuo51_FMN-bd"/>
</dbReference>
<dbReference type="InterPro" id="IPR037225">
    <property type="entry name" value="Nuo51_FMN-bd_sf"/>
</dbReference>
<dbReference type="InterPro" id="IPR019575">
    <property type="entry name" value="Nuop51_4Fe4S-bd"/>
</dbReference>
<dbReference type="InterPro" id="IPR037207">
    <property type="entry name" value="Nuop51_4Fe4S-bd_sf"/>
</dbReference>
<dbReference type="InterPro" id="IPR054765">
    <property type="entry name" value="SLBB_dom"/>
</dbReference>
<dbReference type="NCBIfam" id="TIGR01959">
    <property type="entry name" value="nuoF_fam"/>
    <property type="match status" value="1"/>
</dbReference>
<dbReference type="NCBIfam" id="NF010120">
    <property type="entry name" value="PRK13596.1"/>
    <property type="match status" value="1"/>
</dbReference>
<dbReference type="PANTHER" id="PTHR11780:SF10">
    <property type="entry name" value="NADH DEHYDROGENASE [UBIQUINONE] FLAVOPROTEIN 1, MITOCHONDRIAL"/>
    <property type="match status" value="1"/>
</dbReference>
<dbReference type="PANTHER" id="PTHR11780">
    <property type="entry name" value="NADH-UBIQUINONE OXIDOREDUCTASE FLAVOPROTEIN 1 NDUFV1"/>
    <property type="match status" value="1"/>
</dbReference>
<dbReference type="Pfam" id="PF01512">
    <property type="entry name" value="Complex1_51K"/>
    <property type="match status" value="1"/>
</dbReference>
<dbReference type="Pfam" id="PF10589">
    <property type="entry name" value="NADH_4Fe-4S"/>
    <property type="match status" value="1"/>
</dbReference>
<dbReference type="Pfam" id="PF22461">
    <property type="entry name" value="SLBB_2"/>
    <property type="match status" value="1"/>
</dbReference>
<dbReference type="SMART" id="SM00928">
    <property type="entry name" value="NADH_4Fe-4S"/>
    <property type="match status" value="1"/>
</dbReference>
<dbReference type="SUPFAM" id="SSF142019">
    <property type="entry name" value="Nqo1 FMN-binding domain-like"/>
    <property type="match status" value="1"/>
</dbReference>
<dbReference type="SUPFAM" id="SSF142984">
    <property type="entry name" value="Nqo1 middle domain-like"/>
    <property type="match status" value="1"/>
</dbReference>
<dbReference type="SUPFAM" id="SSF140490">
    <property type="entry name" value="Nqo1C-terminal domain-like"/>
    <property type="match status" value="1"/>
</dbReference>
<dbReference type="PROSITE" id="PS00644">
    <property type="entry name" value="COMPLEX1_51K_1"/>
    <property type="match status" value="1"/>
</dbReference>
<dbReference type="PROSITE" id="PS00645">
    <property type="entry name" value="COMPLEX1_51K_2"/>
    <property type="match status" value="1"/>
</dbReference>
<proteinExistence type="evidence at transcript level"/>
<feature type="transit peptide" description="Mitochondrion" evidence="5">
    <location>
        <begin position="1"/>
        <end position="20"/>
    </location>
</feature>
<feature type="chain" id="PRO_0000019977" description="NADH dehydrogenase [ubiquinone] flavoprotein 1, mitochondrial">
    <location>
        <begin position="21"/>
        <end position="464"/>
    </location>
</feature>
<feature type="binding site" evidence="1">
    <location>
        <begin position="87"/>
        <end position="96"/>
    </location>
    <ligand>
        <name>NADH</name>
        <dbReference type="ChEBI" id="CHEBI:57945"/>
    </ligand>
</feature>
<feature type="binding site" evidence="1">
    <location>
        <begin position="199"/>
        <end position="247"/>
    </location>
    <ligand>
        <name>FMN</name>
        <dbReference type="ChEBI" id="CHEBI:58210"/>
    </ligand>
</feature>
<feature type="binding site" evidence="3">
    <location>
        <position position="379"/>
    </location>
    <ligand>
        <name>[4Fe-4S] cluster</name>
        <dbReference type="ChEBI" id="CHEBI:49883"/>
    </ligand>
</feature>
<feature type="binding site" evidence="3">
    <location>
        <position position="382"/>
    </location>
    <ligand>
        <name>[4Fe-4S] cluster</name>
        <dbReference type="ChEBI" id="CHEBI:49883"/>
    </ligand>
</feature>
<feature type="binding site" evidence="3">
    <location>
        <position position="385"/>
    </location>
    <ligand>
        <name>[4Fe-4S] cluster</name>
        <dbReference type="ChEBI" id="CHEBI:49883"/>
    </ligand>
</feature>
<feature type="binding site" evidence="3">
    <location>
        <position position="425"/>
    </location>
    <ligand>
        <name>[4Fe-4S] cluster</name>
        <dbReference type="ChEBI" id="CHEBI:49883"/>
    </ligand>
</feature>
<feature type="modified residue" description="N6-acetyllysine; alternate" evidence="4">
    <location>
        <position position="81"/>
    </location>
</feature>
<feature type="modified residue" description="N6-succinyllysine; alternate" evidence="4">
    <location>
        <position position="81"/>
    </location>
</feature>
<feature type="modified residue" description="N6-acetyllysine" evidence="4">
    <location>
        <position position="104"/>
    </location>
</feature>
<feature type="modified residue" description="Omega-N-methylarginine" evidence="4">
    <location>
        <position position="257"/>
    </location>
</feature>
<feature type="modified residue" description="N6-acetyllysine" evidence="4">
    <location>
        <position position="375"/>
    </location>
</feature>
<sequence length="464" mass="50670">MLAARRLLGGSLPSRVSVRFSGDTTAPKKTSFGSLKDEDRIFTNLYGRHDWRLKGALSRGDWYKTKEILLKGPDWILGEIKTSGLRGRGGAGFPTGLKWSFMNKPSDGRPKYLVVNADEGEPGTCKDREIIRHDPHKLVEGCLVGGRAMGARAAYIYIRGEFYNEASNLQVAIREAYEAGLIGKNACGSGYDFDVFVVRGAGAYICGEETALIESIEGKQGKPRLKPPFPADVGVFGCPTTVANVETVAVSPTICRRGGTWFAGFGRERNSGTKLFNISGHVNHPCTVEEEMSVPLKELIEKHAGGVTGGWDNLLAVIPGGSSTPLIPKSVCETVLMDFDALVQAQTGLGTAAVIVMDRSTDIVKAIARLIEFYKYESCGQCTPCREGVDWMNKVMARFVRGDARPAEIDSLWEISKQIEGHTICALGDGAAWPVQGLIRHFRPELEERMQRFAQQHQARQAAS</sequence>
<keyword id="KW-0004">4Fe-4S</keyword>
<keyword id="KW-0007">Acetylation</keyword>
<keyword id="KW-0249">Electron transport</keyword>
<keyword id="KW-0285">Flavoprotein</keyword>
<keyword id="KW-0288">FMN</keyword>
<keyword id="KW-0408">Iron</keyword>
<keyword id="KW-0411">Iron-sulfur</keyword>
<keyword id="KW-0472">Membrane</keyword>
<keyword id="KW-0479">Metal-binding</keyword>
<keyword id="KW-0488">Methylation</keyword>
<keyword id="KW-0496">Mitochondrion</keyword>
<keyword id="KW-0999">Mitochondrion inner membrane</keyword>
<keyword id="KW-0520">NAD</keyword>
<keyword id="KW-0560">Oxidoreductase</keyword>
<keyword id="KW-1185">Reference proteome</keyword>
<keyword id="KW-0679">Respiratory chain</keyword>
<keyword id="KW-0809">Transit peptide</keyword>
<keyword id="KW-1278">Translocase</keyword>
<keyword id="KW-0813">Transport</keyword>
<keyword id="KW-0830">Ubiquinone</keyword>
<name>NDUV1_MACFA</name>
<evidence type="ECO:0000250" key="1"/>
<evidence type="ECO:0000250" key="2">
    <source>
        <dbReference type="UniProtKB" id="P25708"/>
    </source>
</evidence>
<evidence type="ECO:0000250" key="3">
    <source>
        <dbReference type="UniProtKB" id="P49821"/>
    </source>
</evidence>
<evidence type="ECO:0000250" key="4">
    <source>
        <dbReference type="UniProtKB" id="Q91YT0"/>
    </source>
</evidence>
<evidence type="ECO:0000255" key="5"/>
<evidence type="ECO:0000305" key="6"/>
<protein>
    <recommendedName>
        <fullName>NADH dehydrogenase [ubiquinone] flavoprotein 1, mitochondrial</fullName>
        <ecNumber evidence="3">7.1.1.2</ecNumber>
    </recommendedName>
    <alternativeName>
        <fullName>Complex I-51kD</fullName>
        <shortName>CI-51kD</shortName>
    </alternativeName>
    <alternativeName>
        <fullName evidence="3">NADH-ubiquinone oxidoreductase 51 kDa subunit</fullName>
    </alternativeName>
</protein>
<accession>Q8HXQ9</accession>